<dbReference type="EC" id="4.1.1.39" evidence="1"/>
<dbReference type="EMBL" id="CP000301">
    <property type="protein sequence ID" value="ABD86889.1"/>
    <property type="status" value="ALT_INIT"/>
    <property type="molecule type" value="Genomic_DNA"/>
</dbReference>
<dbReference type="SMR" id="Q219P7"/>
<dbReference type="STRING" id="316056.RPC_1327"/>
<dbReference type="KEGG" id="rpc:RPC_1327"/>
<dbReference type="eggNOG" id="COG1850">
    <property type="taxonomic scope" value="Bacteria"/>
</dbReference>
<dbReference type="HOGENOM" id="CLU_031450_2_0_5"/>
<dbReference type="OrthoDB" id="9764279at2"/>
<dbReference type="GO" id="GO:0000287">
    <property type="term" value="F:magnesium ion binding"/>
    <property type="evidence" value="ECO:0007669"/>
    <property type="project" value="UniProtKB-UniRule"/>
</dbReference>
<dbReference type="GO" id="GO:0004497">
    <property type="term" value="F:monooxygenase activity"/>
    <property type="evidence" value="ECO:0007669"/>
    <property type="project" value="UniProtKB-KW"/>
</dbReference>
<dbReference type="GO" id="GO:0016984">
    <property type="term" value="F:ribulose-bisphosphate carboxylase activity"/>
    <property type="evidence" value="ECO:0007669"/>
    <property type="project" value="UniProtKB-UniRule"/>
</dbReference>
<dbReference type="GO" id="GO:0019253">
    <property type="term" value="P:reductive pentose-phosphate cycle"/>
    <property type="evidence" value="ECO:0007669"/>
    <property type="project" value="UniProtKB-UniRule"/>
</dbReference>
<dbReference type="CDD" id="cd08212">
    <property type="entry name" value="RuBisCO_large_I"/>
    <property type="match status" value="1"/>
</dbReference>
<dbReference type="Gene3D" id="3.20.20.110">
    <property type="entry name" value="Ribulose bisphosphate carboxylase, large subunit, C-terminal domain"/>
    <property type="match status" value="1"/>
</dbReference>
<dbReference type="Gene3D" id="3.30.70.150">
    <property type="entry name" value="RuBisCO large subunit, N-terminal domain"/>
    <property type="match status" value="1"/>
</dbReference>
<dbReference type="HAMAP" id="MF_01338">
    <property type="entry name" value="RuBisCO_L_type1"/>
    <property type="match status" value="1"/>
</dbReference>
<dbReference type="InterPro" id="IPR033966">
    <property type="entry name" value="RuBisCO"/>
</dbReference>
<dbReference type="InterPro" id="IPR020878">
    <property type="entry name" value="RuBisCo_large_chain_AS"/>
</dbReference>
<dbReference type="InterPro" id="IPR000685">
    <property type="entry name" value="RuBisCO_lsu_C"/>
</dbReference>
<dbReference type="InterPro" id="IPR036376">
    <property type="entry name" value="RuBisCO_lsu_C_sf"/>
</dbReference>
<dbReference type="InterPro" id="IPR017443">
    <property type="entry name" value="RuBisCO_lsu_fd_N"/>
</dbReference>
<dbReference type="InterPro" id="IPR036422">
    <property type="entry name" value="RuBisCO_lsu_N_sf"/>
</dbReference>
<dbReference type="InterPro" id="IPR020888">
    <property type="entry name" value="RuBisCO_lsuI"/>
</dbReference>
<dbReference type="NCBIfam" id="NF003252">
    <property type="entry name" value="PRK04208.1"/>
    <property type="match status" value="1"/>
</dbReference>
<dbReference type="PANTHER" id="PTHR42704">
    <property type="entry name" value="RIBULOSE BISPHOSPHATE CARBOXYLASE"/>
    <property type="match status" value="1"/>
</dbReference>
<dbReference type="PANTHER" id="PTHR42704:SF17">
    <property type="entry name" value="RIBULOSE BISPHOSPHATE CARBOXYLASE LARGE CHAIN"/>
    <property type="match status" value="1"/>
</dbReference>
<dbReference type="Pfam" id="PF00016">
    <property type="entry name" value="RuBisCO_large"/>
    <property type="match status" value="1"/>
</dbReference>
<dbReference type="Pfam" id="PF02788">
    <property type="entry name" value="RuBisCO_large_N"/>
    <property type="match status" value="1"/>
</dbReference>
<dbReference type="SFLD" id="SFLDG01052">
    <property type="entry name" value="RuBisCO"/>
    <property type="match status" value="1"/>
</dbReference>
<dbReference type="SFLD" id="SFLDS00014">
    <property type="entry name" value="RuBisCO"/>
    <property type="match status" value="1"/>
</dbReference>
<dbReference type="SFLD" id="SFLDG00301">
    <property type="entry name" value="RuBisCO-like_proteins"/>
    <property type="match status" value="1"/>
</dbReference>
<dbReference type="SUPFAM" id="SSF51649">
    <property type="entry name" value="RuBisCo, C-terminal domain"/>
    <property type="match status" value="1"/>
</dbReference>
<dbReference type="SUPFAM" id="SSF54966">
    <property type="entry name" value="RuBisCO, large subunit, small (N-terminal) domain"/>
    <property type="match status" value="1"/>
</dbReference>
<dbReference type="PROSITE" id="PS00157">
    <property type="entry name" value="RUBISCO_LARGE"/>
    <property type="match status" value="1"/>
</dbReference>
<proteinExistence type="inferred from homology"/>
<reference key="1">
    <citation type="submission" date="2006-03" db="EMBL/GenBank/DDBJ databases">
        <title>Complete sequence of Rhodopseudomonas palustris BisB18.</title>
        <authorList>
            <consortium name="US DOE Joint Genome Institute"/>
            <person name="Copeland A."/>
            <person name="Lucas S."/>
            <person name="Lapidus A."/>
            <person name="Barry K."/>
            <person name="Detter J.C."/>
            <person name="Glavina del Rio T."/>
            <person name="Hammon N."/>
            <person name="Israni S."/>
            <person name="Dalin E."/>
            <person name="Tice H."/>
            <person name="Pitluck S."/>
            <person name="Chain P."/>
            <person name="Malfatti S."/>
            <person name="Shin M."/>
            <person name="Vergez L."/>
            <person name="Schmutz J."/>
            <person name="Larimer F."/>
            <person name="Land M."/>
            <person name="Hauser L."/>
            <person name="Pelletier D.A."/>
            <person name="Kyrpides N."/>
            <person name="Anderson I."/>
            <person name="Oda Y."/>
            <person name="Harwood C.S."/>
            <person name="Richardson P."/>
        </authorList>
    </citation>
    <scope>NUCLEOTIDE SEQUENCE [LARGE SCALE GENOMIC DNA]</scope>
    <source>
        <strain>BisB18</strain>
    </source>
</reference>
<comment type="function">
    <text evidence="1">RuBisCO catalyzes two reactions: the carboxylation of D-ribulose 1,5-bisphosphate, the primary event in carbon dioxide fixation, as well as the oxidative fragmentation of the pentose substrate in the photorespiration process. Both reactions occur simultaneously and in competition at the same active site.</text>
</comment>
<comment type="catalytic activity">
    <reaction evidence="1">
        <text>2 (2R)-3-phosphoglycerate + 2 H(+) = D-ribulose 1,5-bisphosphate + CO2 + H2O</text>
        <dbReference type="Rhea" id="RHEA:23124"/>
        <dbReference type="ChEBI" id="CHEBI:15377"/>
        <dbReference type="ChEBI" id="CHEBI:15378"/>
        <dbReference type="ChEBI" id="CHEBI:16526"/>
        <dbReference type="ChEBI" id="CHEBI:57870"/>
        <dbReference type="ChEBI" id="CHEBI:58272"/>
        <dbReference type="EC" id="4.1.1.39"/>
    </reaction>
</comment>
<comment type="catalytic activity">
    <reaction evidence="1">
        <text>D-ribulose 1,5-bisphosphate + O2 = 2-phosphoglycolate + (2R)-3-phosphoglycerate + 2 H(+)</text>
        <dbReference type="Rhea" id="RHEA:36631"/>
        <dbReference type="ChEBI" id="CHEBI:15378"/>
        <dbReference type="ChEBI" id="CHEBI:15379"/>
        <dbReference type="ChEBI" id="CHEBI:57870"/>
        <dbReference type="ChEBI" id="CHEBI:58033"/>
        <dbReference type="ChEBI" id="CHEBI:58272"/>
    </reaction>
</comment>
<comment type="cofactor">
    <cofactor evidence="1">
        <name>Mg(2+)</name>
        <dbReference type="ChEBI" id="CHEBI:18420"/>
    </cofactor>
    <text evidence="1">Binds 1 Mg(2+) ion per subunit.</text>
</comment>
<comment type="subunit">
    <text evidence="1">Heterohexadecamer of 8 large chains and 8 small chains.</text>
</comment>
<comment type="miscellaneous">
    <text evidence="1">The basic functional RuBisCO is composed of a large chain homodimer in a 'head-to-tail' conformation. In form I RuBisCO this homodimer is arranged in a barrel-like tetramer with the small subunits forming a tetrameric 'cap' on each end of the 'barrel'.</text>
</comment>
<comment type="similarity">
    <text evidence="1">Belongs to the RuBisCO large chain family. Type I subfamily.</text>
</comment>
<comment type="sequence caution" evidence="2">
    <conflict type="erroneous initiation">
        <sequence resource="EMBL-CDS" id="ABD86889"/>
    </conflict>
</comment>
<organism>
    <name type="scientific">Rhodopseudomonas palustris (strain BisB18)</name>
    <dbReference type="NCBI Taxonomy" id="316056"/>
    <lineage>
        <taxon>Bacteria</taxon>
        <taxon>Pseudomonadati</taxon>
        <taxon>Pseudomonadota</taxon>
        <taxon>Alphaproteobacteria</taxon>
        <taxon>Hyphomicrobiales</taxon>
        <taxon>Nitrobacteraceae</taxon>
        <taxon>Rhodopseudomonas</taxon>
    </lineage>
</organism>
<keyword id="KW-0113">Calvin cycle</keyword>
<keyword id="KW-0120">Carbon dioxide fixation</keyword>
<keyword id="KW-0456">Lyase</keyword>
<keyword id="KW-0460">Magnesium</keyword>
<keyword id="KW-0479">Metal-binding</keyword>
<keyword id="KW-0503">Monooxygenase</keyword>
<keyword id="KW-0560">Oxidoreductase</keyword>
<keyword id="KW-0602">Photosynthesis</keyword>
<gene>
    <name evidence="1" type="primary">cbbL</name>
    <name type="ordered locus">RPC_1327</name>
</gene>
<sequence length="485" mass="54027">MNESVTIRGKDRYKSGVMEYKKMGYWEPDYEPKDTDIIALFRVTPQDGVDPTEASAAVAGESSTATWTVVWTDRLTAAEKYRAKCYRVDPVPNSPGQFFAYIAYDLDLFENGSIANLSASIIGNVFGFKPLKALRLEDMRLPVAYVKTFQGPATGIVVERERMDKFGRPLLGATVKPKLGLSGRNYGRVVYEALKGGLDFTKDDENINSQPFMHWRERFLYCMEAVNKAQAASGEIKGTYLNVTAGTMEEMYERAEFAKQLGSVIIMIDLVIGYTAIQSMAKWARRNDMILHLHRAGHSTYTRQRNHGVSFRVIAKWMRLAGVDHIHAGTVVGKLEGDPATTKGYYDICREDYNPMQLEHGIFFEQNWASLNKLMPVASGGIHAGQMHQLLDHLGEDVVLQFGGGTIGHPMGIQAGATANRVALEAMIMARNEGRDYLHEGEEILAKAALTCTPLKAALETWKNVTFNYESTDMPDYAPTPSVSM</sequence>
<accession>Q219P7</accession>
<name>RBL_RHOPB</name>
<evidence type="ECO:0000255" key="1">
    <source>
        <dbReference type="HAMAP-Rule" id="MF_01338"/>
    </source>
</evidence>
<evidence type="ECO:0000305" key="2"/>
<feature type="chain" id="PRO_0000251457" description="Ribulose bisphosphate carboxylase large chain">
    <location>
        <begin position="1"/>
        <end position="485"/>
    </location>
</feature>
<feature type="active site" description="Proton acceptor" evidence="1">
    <location>
        <position position="176"/>
    </location>
</feature>
<feature type="active site" description="Proton acceptor" evidence="1">
    <location>
        <position position="294"/>
    </location>
</feature>
<feature type="binding site" description="in homodimeric partner" evidence="1">
    <location>
        <position position="124"/>
    </location>
    <ligand>
        <name>substrate</name>
    </ligand>
</feature>
<feature type="binding site" evidence="1">
    <location>
        <position position="174"/>
    </location>
    <ligand>
        <name>substrate</name>
    </ligand>
</feature>
<feature type="binding site" evidence="1">
    <location>
        <position position="178"/>
    </location>
    <ligand>
        <name>substrate</name>
    </ligand>
</feature>
<feature type="binding site" description="via carbamate group" evidence="1">
    <location>
        <position position="202"/>
    </location>
    <ligand>
        <name>Mg(2+)</name>
        <dbReference type="ChEBI" id="CHEBI:18420"/>
    </ligand>
</feature>
<feature type="binding site" evidence="1">
    <location>
        <position position="204"/>
    </location>
    <ligand>
        <name>Mg(2+)</name>
        <dbReference type="ChEBI" id="CHEBI:18420"/>
    </ligand>
</feature>
<feature type="binding site" evidence="1">
    <location>
        <position position="205"/>
    </location>
    <ligand>
        <name>Mg(2+)</name>
        <dbReference type="ChEBI" id="CHEBI:18420"/>
    </ligand>
</feature>
<feature type="binding site" evidence="1">
    <location>
        <position position="295"/>
    </location>
    <ligand>
        <name>substrate</name>
    </ligand>
</feature>
<feature type="binding site" evidence="1">
    <location>
        <position position="327"/>
    </location>
    <ligand>
        <name>substrate</name>
    </ligand>
</feature>
<feature type="binding site" evidence="1">
    <location>
        <position position="379"/>
    </location>
    <ligand>
        <name>substrate</name>
    </ligand>
</feature>
<feature type="site" description="Transition state stabilizer" evidence="1">
    <location>
        <position position="334"/>
    </location>
</feature>
<feature type="modified residue" description="N6-carboxylysine" evidence="1">
    <location>
        <position position="202"/>
    </location>
</feature>
<protein>
    <recommendedName>
        <fullName evidence="1">Ribulose bisphosphate carboxylase large chain</fullName>
        <shortName evidence="1">RuBisCO large subunit</shortName>
        <ecNumber evidence="1">4.1.1.39</ecNumber>
    </recommendedName>
</protein>